<gene>
    <name evidence="1" type="primary">recA</name>
    <name type="ordered locus">A1I_07345</name>
</gene>
<sequence>MSNIDKEKAVAAALAQIEKSYGKGSVMKLGQRPNVDIESVSTGSLGLDIALGIGGVPKGRIIEIFGPESSGKTTLTLHLIAEAQKKGGTCAFIDAEHALDPAYAKKLGVNIDELIISQPDTGEQALEIADTLIRSGGIDMIIIDSVAALVPKSEIEGEMGDAQMASQARLMSQALRKLTASINRTNCITVFINQIRMKIGVMFGSPETTTGGNALKFYASVRIDIRRIGSIKDKEEVIGSQTKVKVVKNKVSPPFKTADFDIMYGSGISKEGEIIDLGVKLDIIEKSGSWFSYNSVRIGQGRENVKQYLKDNPKISNEIEKLVREKSSKVTNINFEQEEEVND</sequence>
<feature type="chain" id="PRO_1000047984" description="Protein RecA">
    <location>
        <begin position="1"/>
        <end position="343"/>
    </location>
</feature>
<feature type="binding site" evidence="1">
    <location>
        <begin position="66"/>
        <end position="73"/>
    </location>
    <ligand>
        <name>ATP</name>
        <dbReference type="ChEBI" id="CHEBI:30616"/>
    </ligand>
</feature>
<reference key="1">
    <citation type="submission" date="2007-09" db="EMBL/GenBank/DDBJ databases">
        <title>Complete genome sequencing of Rickettsia bellii.</title>
        <authorList>
            <person name="Madan A."/>
            <person name="Lee H."/>
            <person name="Madan A."/>
            <person name="Yoon J.-G."/>
            <person name="Ryu G.-Y."/>
            <person name="Dasch G."/>
            <person name="Ereemeva M."/>
        </authorList>
    </citation>
    <scope>NUCLEOTIDE SEQUENCE [LARGE SCALE GENOMIC DNA]</scope>
    <source>
        <strain>OSU 85-389</strain>
    </source>
</reference>
<keyword id="KW-0067">ATP-binding</keyword>
<keyword id="KW-0963">Cytoplasm</keyword>
<keyword id="KW-0227">DNA damage</keyword>
<keyword id="KW-0233">DNA recombination</keyword>
<keyword id="KW-0234">DNA repair</keyword>
<keyword id="KW-0238">DNA-binding</keyword>
<keyword id="KW-0547">Nucleotide-binding</keyword>
<keyword id="KW-0742">SOS response</keyword>
<dbReference type="EMBL" id="CP000849">
    <property type="protein sequence ID" value="ABV79767.1"/>
    <property type="molecule type" value="Genomic_DNA"/>
</dbReference>
<dbReference type="RefSeq" id="WP_012152240.1">
    <property type="nucleotide sequence ID" value="NC_009883.1"/>
</dbReference>
<dbReference type="SMR" id="A8GY17"/>
<dbReference type="KEGG" id="rbo:A1I_07345"/>
<dbReference type="HOGENOM" id="CLU_040469_3_2_5"/>
<dbReference type="GO" id="GO:0005829">
    <property type="term" value="C:cytosol"/>
    <property type="evidence" value="ECO:0007669"/>
    <property type="project" value="TreeGrafter"/>
</dbReference>
<dbReference type="GO" id="GO:0005524">
    <property type="term" value="F:ATP binding"/>
    <property type="evidence" value="ECO:0007669"/>
    <property type="project" value="UniProtKB-UniRule"/>
</dbReference>
<dbReference type="GO" id="GO:0016887">
    <property type="term" value="F:ATP hydrolysis activity"/>
    <property type="evidence" value="ECO:0007669"/>
    <property type="project" value="InterPro"/>
</dbReference>
<dbReference type="GO" id="GO:0140664">
    <property type="term" value="F:ATP-dependent DNA damage sensor activity"/>
    <property type="evidence" value="ECO:0007669"/>
    <property type="project" value="InterPro"/>
</dbReference>
<dbReference type="GO" id="GO:0003684">
    <property type="term" value="F:damaged DNA binding"/>
    <property type="evidence" value="ECO:0007669"/>
    <property type="project" value="UniProtKB-UniRule"/>
</dbReference>
<dbReference type="GO" id="GO:0003697">
    <property type="term" value="F:single-stranded DNA binding"/>
    <property type="evidence" value="ECO:0007669"/>
    <property type="project" value="UniProtKB-UniRule"/>
</dbReference>
<dbReference type="GO" id="GO:0006310">
    <property type="term" value="P:DNA recombination"/>
    <property type="evidence" value="ECO:0007669"/>
    <property type="project" value="UniProtKB-UniRule"/>
</dbReference>
<dbReference type="GO" id="GO:0006281">
    <property type="term" value="P:DNA repair"/>
    <property type="evidence" value="ECO:0007669"/>
    <property type="project" value="UniProtKB-UniRule"/>
</dbReference>
<dbReference type="GO" id="GO:0009432">
    <property type="term" value="P:SOS response"/>
    <property type="evidence" value="ECO:0007669"/>
    <property type="project" value="UniProtKB-UniRule"/>
</dbReference>
<dbReference type="CDD" id="cd00983">
    <property type="entry name" value="RecA"/>
    <property type="match status" value="1"/>
</dbReference>
<dbReference type="FunFam" id="3.40.50.300:FF:000087">
    <property type="entry name" value="Recombinase RecA"/>
    <property type="match status" value="1"/>
</dbReference>
<dbReference type="Gene3D" id="3.40.50.300">
    <property type="entry name" value="P-loop containing nucleotide triphosphate hydrolases"/>
    <property type="match status" value="1"/>
</dbReference>
<dbReference type="HAMAP" id="MF_00268">
    <property type="entry name" value="RecA"/>
    <property type="match status" value="1"/>
</dbReference>
<dbReference type="InterPro" id="IPR003593">
    <property type="entry name" value="AAA+_ATPase"/>
</dbReference>
<dbReference type="InterPro" id="IPR013765">
    <property type="entry name" value="DNA_recomb/repair_RecA"/>
</dbReference>
<dbReference type="InterPro" id="IPR020584">
    <property type="entry name" value="DNA_recomb/repair_RecA_CS"/>
</dbReference>
<dbReference type="InterPro" id="IPR027417">
    <property type="entry name" value="P-loop_NTPase"/>
</dbReference>
<dbReference type="InterPro" id="IPR049261">
    <property type="entry name" value="RecA-like_C"/>
</dbReference>
<dbReference type="InterPro" id="IPR049428">
    <property type="entry name" value="RecA-like_N"/>
</dbReference>
<dbReference type="InterPro" id="IPR020588">
    <property type="entry name" value="RecA_ATP-bd"/>
</dbReference>
<dbReference type="InterPro" id="IPR023400">
    <property type="entry name" value="RecA_C_sf"/>
</dbReference>
<dbReference type="InterPro" id="IPR020587">
    <property type="entry name" value="RecA_monomer-monomer_interface"/>
</dbReference>
<dbReference type="NCBIfam" id="TIGR02012">
    <property type="entry name" value="tigrfam_recA"/>
    <property type="match status" value="1"/>
</dbReference>
<dbReference type="PANTHER" id="PTHR45900:SF1">
    <property type="entry name" value="MITOCHONDRIAL DNA REPAIR PROTEIN RECA HOMOLOG-RELATED"/>
    <property type="match status" value="1"/>
</dbReference>
<dbReference type="PANTHER" id="PTHR45900">
    <property type="entry name" value="RECA"/>
    <property type="match status" value="1"/>
</dbReference>
<dbReference type="Pfam" id="PF00154">
    <property type="entry name" value="RecA"/>
    <property type="match status" value="1"/>
</dbReference>
<dbReference type="Pfam" id="PF21096">
    <property type="entry name" value="RecA_C"/>
    <property type="match status" value="1"/>
</dbReference>
<dbReference type="PRINTS" id="PR00142">
    <property type="entry name" value="RECA"/>
</dbReference>
<dbReference type="SMART" id="SM00382">
    <property type="entry name" value="AAA"/>
    <property type="match status" value="1"/>
</dbReference>
<dbReference type="SUPFAM" id="SSF52540">
    <property type="entry name" value="P-loop containing nucleoside triphosphate hydrolases"/>
    <property type="match status" value="1"/>
</dbReference>
<dbReference type="SUPFAM" id="SSF54752">
    <property type="entry name" value="RecA protein, C-terminal domain"/>
    <property type="match status" value="1"/>
</dbReference>
<dbReference type="PROSITE" id="PS00321">
    <property type="entry name" value="RECA_1"/>
    <property type="match status" value="1"/>
</dbReference>
<dbReference type="PROSITE" id="PS50162">
    <property type="entry name" value="RECA_2"/>
    <property type="match status" value="1"/>
</dbReference>
<dbReference type="PROSITE" id="PS50163">
    <property type="entry name" value="RECA_3"/>
    <property type="match status" value="1"/>
</dbReference>
<name>RECA_RICB8</name>
<evidence type="ECO:0000255" key="1">
    <source>
        <dbReference type="HAMAP-Rule" id="MF_00268"/>
    </source>
</evidence>
<accession>A8GY17</accession>
<proteinExistence type="inferred from homology"/>
<comment type="function">
    <text evidence="1">Can catalyze the hydrolysis of ATP in the presence of single-stranded DNA, the ATP-dependent uptake of single-stranded DNA by duplex DNA, and the ATP-dependent hybridization of homologous single-stranded DNAs. It interacts with LexA causing its activation and leading to its autocatalytic cleavage.</text>
</comment>
<comment type="subcellular location">
    <subcellularLocation>
        <location evidence="1">Cytoplasm</location>
    </subcellularLocation>
</comment>
<comment type="similarity">
    <text evidence="1">Belongs to the RecA family.</text>
</comment>
<organism>
    <name type="scientific">Rickettsia bellii (strain OSU 85-389)</name>
    <dbReference type="NCBI Taxonomy" id="391896"/>
    <lineage>
        <taxon>Bacteria</taxon>
        <taxon>Pseudomonadati</taxon>
        <taxon>Pseudomonadota</taxon>
        <taxon>Alphaproteobacteria</taxon>
        <taxon>Rickettsiales</taxon>
        <taxon>Rickettsiaceae</taxon>
        <taxon>Rickettsieae</taxon>
        <taxon>Rickettsia</taxon>
        <taxon>belli group</taxon>
    </lineage>
</organism>
<protein>
    <recommendedName>
        <fullName evidence="1">Protein RecA</fullName>
    </recommendedName>
    <alternativeName>
        <fullName evidence="1">Recombinase A</fullName>
    </alternativeName>
</protein>